<reference key="1">
    <citation type="journal article" date="2001" name="Toxicon">
        <title>Purification, amino-acid sequence and partial characterization of two toxins with anti-insect activity from the venom of the South American scorpion Tityus bahiensis (Buthidae).</title>
        <authorList>
            <person name="Pimenta A.M.C."/>
            <person name="Martin-Eauclaire M.-F."/>
            <person name="Rochat H."/>
            <person name="Figueiredo S.G."/>
            <person name="Kalapothakis E."/>
            <person name="Afonso L.C.C."/>
            <person name="De Lima M.E."/>
        </authorList>
    </citation>
    <scope>PROTEIN SEQUENCE</scope>
    <scope>TOXIC DOSE</scope>
    <scope>MASS SPECTROMETRY</scope>
    <source>
        <tissue>Venom</tissue>
    </source>
</reference>
<reference key="2">
    <citation type="journal article" date="2012" name="PLoS ONE">
        <title>Identification and phylogenetic analysis of Tityus pachyurus and Tityus obscurus novel putative Na+-channel scorpion toxins.</title>
        <authorList>
            <person name="Guerrero-Vargas J.A."/>
            <person name="Mourao C.B."/>
            <person name="Quintero-Hernandez V."/>
            <person name="Possani L.D."/>
            <person name="Schwartz E.F."/>
        </authorList>
    </citation>
    <scope>NOMENCLATURE</scope>
</reference>
<accession>P60275</accession>
<dbReference type="GO" id="GO:0005576">
    <property type="term" value="C:extracellular region"/>
    <property type="evidence" value="ECO:0007669"/>
    <property type="project" value="UniProtKB-SubCell"/>
</dbReference>
<dbReference type="GO" id="GO:0019871">
    <property type="term" value="F:sodium channel inhibitor activity"/>
    <property type="evidence" value="ECO:0007669"/>
    <property type="project" value="InterPro"/>
</dbReference>
<dbReference type="GO" id="GO:0090729">
    <property type="term" value="F:toxin activity"/>
    <property type="evidence" value="ECO:0007669"/>
    <property type="project" value="UniProtKB-KW"/>
</dbReference>
<dbReference type="GO" id="GO:0006952">
    <property type="term" value="P:defense response"/>
    <property type="evidence" value="ECO:0007669"/>
    <property type="project" value="InterPro"/>
</dbReference>
<dbReference type="CDD" id="cd23106">
    <property type="entry name" value="neurotoxins_LC_scorpion"/>
    <property type="match status" value="1"/>
</dbReference>
<dbReference type="FunFam" id="3.30.30.10:FF:000002">
    <property type="entry name" value="Alpha-like toxin BmK-M1"/>
    <property type="match status" value="1"/>
</dbReference>
<dbReference type="Gene3D" id="3.30.30.10">
    <property type="entry name" value="Knottin, scorpion toxin-like"/>
    <property type="match status" value="1"/>
</dbReference>
<dbReference type="InterPro" id="IPR044062">
    <property type="entry name" value="LCN-type_CS_alpha_beta_dom"/>
</dbReference>
<dbReference type="InterPro" id="IPR003614">
    <property type="entry name" value="Scorpion_toxin-like"/>
</dbReference>
<dbReference type="InterPro" id="IPR036574">
    <property type="entry name" value="Scorpion_toxin-like_sf"/>
</dbReference>
<dbReference type="InterPro" id="IPR018218">
    <property type="entry name" value="Scorpion_toxinL"/>
</dbReference>
<dbReference type="InterPro" id="IPR002061">
    <property type="entry name" value="Scorpion_toxinL/defensin"/>
</dbReference>
<dbReference type="Pfam" id="PF00537">
    <property type="entry name" value="Toxin_3"/>
    <property type="match status" value="1"/>
</dbReference>
<dbReference type="PRINTS" id="PR00285">
    <property type="entry name" value="SCORPNTOXIN"/>
</dbReference>
<dbReference type="SMART" id="SM00505">
    <property type="entry name" value="Knot1"/>
    <property type="match status" value="1"/>
</dbReference>
<dbReference type="SUPFAM" id="SSF57095">
    <property type="entry name" value="Scorpion toxin-like"/>
    <property type="match status" value="1"/>
</dbReference>
<dbReference type="PROSITE" id="PS51863">
    <property type="entry name" value="LCN_CSAB"/>
    <property type="match status" value="1"/>
</dbReference>
<comment type="function">
    <text evidence="1">Beta toxins bind voltage-independently at site-4 of sodium channels (Nav) and shift the voltage of activation toward more negative potentials thereby affecting sodium channel activation and promoting spontaneous and repetitive firing (By similarity). This toxin is only active against insects.</text>
</comment>
<comment type="subcellular location">
    <subcellularLocation>
        <location>Secreted</location>
    </subcellularLocation>
</comment>
<comment type="tissue specificity">
    <text>Expressed by the venom gland.</text>
</comment>
<comment type="domain">
    <text evidence="4">Has the structural arrangement of an alpha-helix connected to antiparallel beta-sheets by disulfide bonds (CS-alpha/beta).</text>
</comment>
<comment type="mass spectrometry"/>
<comment type="toxic dose">
    <text evidence="3">LD(50) is 80.0 ng/house fly.</text>
</comment>
<comment type="similarity">
    <text evidence="4">Belongs to the long (4 C-C) scorpion toxin superfamily. Sodium channel inhibitor family. Beta subfamily.</text>
</comment>
<organism>
    <name type="scientific">Tityus bahiensis</name>
    <name type="common">Brazilian scorpion</name>
    <dbReference type="NCBI Taxonomy" id="50343"/>
    <lineage>
        <taxon>Eukaryota</taxon>
        <taxon>Metazoa</taxon>
        <taxon>Ecdysozoa</taxon>
        <taxon>Arthropoda</taxon>
        <taxon>Chelicerata</taxon>
        <taxon>Arachnida</taxon>
        <taxon>Scorpiones</taxon>
        <taxon>Buthida</taxon>
        <taxon>Buthoidea</taxon>
        <taxon>Buthidae</taxon>
        <taxon>Tityus</taxon>
    </lineage>
</organism>
<name>SCXI_TITBA</name>
<sequence>GKEGYPVDSRGCKVTCFFTGAGYCDKECKLKKASSGYCAWPACYCYGLPDSVPVYDNASNKCB</sequence>
<proteinExistence type="evidence at protein level"/>
<protein>
    <recommendedName>
        <fullName>Insect toxin TbIT-1</fullName>
    </recommendedName>
    <alternativeName>
        <fullName>P-Ins-beta* NaTx4.3</fullName>
    </alternativeName>
    <alternativeName>
        <fullName>TbIT-I</fullName>
    </alternativeName>
</protein>
<evidence type="ECO:0000250" key="1"/>
<evidence type="ECO:0000255" key="2">
    <source>
        <dbReference type="PROSITE-ProRule" id="PRU01210"/>
    </source>
</evidence>
<evidence type="ECO:0000269" key="3">
    <source>
    </source>
</evidence>
<evidence type="ECO:0000305" key="4"/>
<keyword id="KW-0903">Direct protein sequencing</keyword>
<keyword id="KW-1015">Disulfide bond</keyword>
<keyword id="KW-0872">Ion channel impairing toxin</keyword>
<keyword id="KW-0528">Neurotoxin</keyword>
<keyword id="KW-0964">Secreted</keyword>
<keyword id="KW-0800">Toxin</keyword>
<keyword id="KW-0738">Voltage-gated sodium channel impairing toxin</keyword>
<feature type="chain" id="PRO_0000066796" description="Insect toxin TbIT-1">
    <location>
        <begin position="1"/>
        <end position="63"/>
    </location>
</feature>
<feature type="domain" description="LCN-type CS-alpha/beta" evidence="2">
    <location>
        <begin position="2"/>
        <end position="63"/>
    </location>
</feature>
<feature type="disulfide bond" evidence="2">
    <location>
        <begin position="12"/>
        <end position="62"/>
    </location>
</feature>
<feature type="disulfide bond" evidence="2">
    <location>
        <begin position="16"/>
        <end position="38"/>
    </location>
</feature>
<feature type="disulfide bond" evidence="2">
    <location>
        <begin position="24"/>
        <end position="43"/>
    </location>
</feature>
<feature type="disulfide bond" evidence="2">
    <location>
        <begin position="28"/>
        <end position="45"/>
    </location>
</feature>